<name>YCJV_ECOUT</name>
<reference key="1">
    <citation type="journal article" date="2006" name="Proc. Natl. Acad. Sci. U.S.A.">
        <title>Identification of genes subject to positive selection in uropathogenic strains of Escherichia coli: a comparative genomics approach.</title>
        <authorList>
            <person name="Chen S.L."/>
            <person name="Hung C.-S."/>
            <person name="Xu J."/>
            <person name="Reigstad C.S."/>
            <person name="Magrini V."/>
            <person name="Sabo A."/>
            <person name="Blasiar D."/>
            <person name="Bieri T."/>
            <person name="Meyer R.R."/>
            <person name="Ozersky P."/>
            <person name="Armstrong J.R."/>
            <person name="Fulton R.S."/>
            <person name="Latreille J.P."/>
            <person name="Spieth J."/>
            <person name="Hooton T.M."/>
            <person name="Mardis E.R."/>
            <person name="Hultgren S.J."/>
            <person name="Gordon J.I."/>
        </authorList>
    </citation>
    <scope>NUCLEOTIDE SEQUENCE [LARGE SCALE GENOMIC DNA]</scope>
    <source>
        <strain>UTI89 / UPEC</strain>
    </source>
</reference>
<gene>
    <name type="primary">ycjV</name>
    <name type="ordered locus">UTI89_C1589</name>
</gene>
<protein>
    <recommendedName>
        <fullName>Uncharacterized ABC transporter ATP-binding protein YcjV</fullName>
    </recommendedName>
</protein>
<accession>Q1RC47</accession>
<feature type="chain" id="PRO_0000263027" description="Uncharacterized ABC transporter ATP-binding protein YcjV">
    <location>
        <begin position="1"/>
        <end position="360"/>
    </location>
</feature>
<proteinExistence type="predicted"/>
<dbReference type="EMBL" id="CP000243">
    <property type="protein sequence ID" value="ABE07067.1"/>
    <property type="molecule type" value="Genomic_DNA"/>
</dbReference>
<dbReference type="RefSeq" id="WP_000068006.1">
    <property type="nucleotide sequence ID" value="NZ_CP064825.1"/>
</dbReference>
<dbReference type="SMR" id="Q1RC47"/>
<dbReference type="KEGG" id="eci:UTI89_C1589"/>
<dbReference type="HOGENOM" id="CLU_000604_1_1_6"/>
<dbReference type="Proteomes" id="UP000001952">
    <property type="component" value="Chromosome"/>
</dbReference>
<dbReference type="GO" id="GO:0055052">
    <property type="term" value="C:ATP-binding cassette (ABC) transporter complex, substrate-binding subunit-containing"/>
    <property type="evidence" value="ECO:0007669"/>
    <property type="project" value="TreeGrafter"/>
</dbReference>
<dbReference type="GO" id="GO:0140359">
    <property type="term" value="F:ABC-type transporter activity"/>
    <property type="evidence" value="ECO:0007669"/>
    <property type="project" value="InterPro"/>
</dbReference>
<dbReference type="GO" id="GO:0005524">
    <property type="term" value="F:ATP binding"/>
    <property type="evidence" value="ECO:0007669"/>
    <property type="project" value="UniProtKB-KW"/>
</dbReference>
<dbReference type="GO" id="GO:0016887">
    <property type="term" value="F:ATP hydrolysis activity"/>
    <property type="evidence" value="ECO:0007669"/>
    <property type="project" value="InterPro"/>
</dbReference>
<dbReference type="GO" id="GO:0008643">
    <property type="term" value="P:carbohydrate transport"/>
    <property type="evidence" value="ECO:0007669"/>
    <property type="project" value="InterPro"/>
</dbReference>
<dbReference type="CDD" id="cd03301">
    <property type="entry name" value="ABC_MalK_N"/>
    <property type="match status" value="1"/>
</dbReference>
<dbReference type="FunFam" id="3.40.50.300:FF:000042">
    <property type="entry name" value="Maltose/maltodextrin ABC transporter, ATP-binding protein"/>
    <property type="match status" value="1"/>
</dbReference>
<dbReference type="Gene3D" id="2.40.50.100">
    <property type="match status" value="1"/>
</dbReference>
<dbReference type="Gene3D" id="2.40.50.140">
    <property type="entry name" value="Nucleic acid-binding proteins"/>
    <property type="match status" value="1"/>
</dbReference>
<dbReference type="Gene3D" id="3.40.50.300">
    <property type="entry name" value="P-loop containing nucleotide triphosphate hydrolases"/>
    <property type="match status" value="1"/>
</dbReference>
<dbReference type="InterPro" id="IPR003593">
    <property type="entry name" value="AAA+_ATPase"/>
</dbReference>
<dbReference type="InterPro" id="IPR003439">
    <property type="entry name" value="ABC_transporter-like_ATP-bd"/>
</dbReference>
<dbReference type="InterPro" id="IPR017871">
    <property type="entry name" value="ABC_transporter-like_CS"/>
</dbReference>
<dbReference type="InterPro" id="IPR015855">
    <property type="entry name" value="ABC_transpr_MalK-like"/>
</dbReference>
<dbReference type="InterPro" id="IPR047641">
    <property type="entry name" value="ABC_transpr_MalK/UgpC-like"/>
</dbReference>
<dbReference type="InterPro" id="IPR008995">
    <property type="entry name" value="Mo/tungstate-bd_C_term_dom"/>
</dbReference>
<dbReference type="InterPro" id="IPR012340">
    <property type="entry name" value="NA-bd_OB-fold"/>
</dbReference>
<dbReference type="InterPro" id="IPR040582">
    <property type="entry name" value="OB_MalK-like"/>
</dbReference>
<dbReference type="InterPro" id="IPR027417">
    <property type="entry name" value="P-loop_NTPase"/>
</dbReference>
<dbReference type="InterPro" id="IPR005116">
    <property type="entry name" value="Transp-assoc_OB_typ1"/>
</dbReference>
<dbReference type="NCBIfam" id="NF008653">
    <property type="entry name" value="PRK11650.1"/>
    <property type="match status" value="1"/>
</dbReference>
<dbReference type="PANTHER" id="PTHR43875">
    <property type="entry name" value="MALTODEXTRIN IMPORT ATP-BINDING PROTEIN MSMX"/>
    <property type="match status" value="1"/>
</dbReference>
<dbReference type="PANTHER" id="PTHR43875:SF1">
    <property type="entry name" value="OSMOPROTECTIVE COMPOUNDS UPTAKE ATP-BINDING PROTEIN GGTA"/>
    <property type="match status" value="1"/>
</dbReference>
<dbReference type="Pfam" id="PF00005">
    <property type="entry name" value="ABC_tran"/>
    <property type="match status" value="1"/>
</dbReference>
<dbReference type="Pfam" id="PF17912">
    <property type="entry name" value="OB_MalK"/>
    <property type="match status" value="1"/>
</dbReference>
<dbReference type="Pfam" id="PF03459">
    <property type="entry name" value="TOBE"/>
    <property type="match status" value="1"/>
</dbReference>
<dbReference type="SMART" id="SM00382">
    <property type="entry name" value="AAA"/>
    <property type="match status" value="1"/>
</dbReference>
<dbReference type="SUPFAM" id="SSF50331">
    <property type="entry name" value="MOP-like"/>
    <property type="match status" value="1"/>
</dbReference>
<dbReference type="SUPFAM" id="SSF52540">
    <property type="entry name" value="P-loop containing nucleoside triphosphate hydrolases"/>
    <property type="match status" value="1"/>
</dbReference>
<dbReference type="PROSITE" id="PS00211">
    <property type="entry name" value="ABC_TRANSPORTER_1"/>
    <property type="match status" value="1"/>
</dbReference>
<dbReference type="PROSITE" id="PS50893">
    <property type="entry name" value="ABC_TRANSPORTER_2"/>
    <property type="match status" value="1"/>
</dbReference>
<organism>
    <name type="scientific">Escherichia coli (strain UTI89 / UPEC)</name>
    <dbReference type="NCBI Taxonomy" id="364106"/>
    <lineage>
        <taxon>Bacteria</taxon>
        <taxon>Pseudomonadati</taxon>
        <taxon>Pseudomonadota</taxon>
        <taxon>Gammaproteobacteria</taxon>
        <taxon>Enterobacterales</taxon>
        <taxon>Enterobacteriaceae</taxon>
        <taxon>Escherichia</taxon>
    </lineage>
</organism>
<sequence>MAQLSLQHIQKIYDNQVHVVKDFNLEIVDKEFIVFVGPSGCGKSTTLRMIAGLEEISGGDLLIDGKRMNDVPAKARNIAMVFQNYALYPHMTVYDNMAFGLKMQKIAREVIDERVNWAAQILGLREYLKRKPGALSGGQRQRVALGRAIVREAGVFLMDEPLSNLDAKLRVQMRAEISKLHQKLNTTMIYVTHDQTEAMTMATRIVIMKDGIVQQVGAPKTVYNQPANMFVAGFIGSPAMNFIRGTIDGDKFVTETLKLTIPEEKLAVLKTQESLHKPIVMGIRPEDIHPDAQEENNISAKISVAELTGAEFMLYTTVGGHELVVRAGALNDYHAGENITIHFDMTKCHFFDAETEIAIC</sequence>
<keyword id="KW-0067">ATP-binding</keyword>
<keyword id="KW-0547">Nucleotide-binding</keyword>
<keyword id="KW-0813">Transport</keyword>